<gene>
    <name evidence="1" type="primary">coaE</name>
    <name type="ordered locus">STM0140</name>
</gene>
<organism>
    <name type="scientific">Salmonella typhimurium (strain LT2 / SGSC1412 / ATCC 700720)</name>
    <dbReference type="NCBI Taxonomy" id="99287"/>
    <lineage>
        <taxon>Bacteria</taxon>
        <taxon>Pseudomonadati</taxon>
        <taxon>Pseudomonadota</taxon>
        <taxon>Gammaproteobacteria</taxon>
        <taxon>Enterobacterales</taxon>
        <taxon>Enterobacteriaceae</taxon>
        <taxon>Salmonella</taxon>
    </lineage>
</organism>
<comment type="function">
    <text evidence="1">Catalyzes the phosphorylation of the 3'-hydroxyl group of dephosphocoenzyme A to form coenzyme A.</text>
</comment>
<comment type="catalytic activity">
    <reaction evidence="1">
        <text>3'-dephospho-CoA + ATP = ADP + CoA + H(+)</text>
        <dbReference type="Rhea" id="RHEA:18245"/>
        <dbReference type="ChEBI" id="CHEBI:15378"/>
        <dbReference type="ChEBI" id="CHEBI:30616"/>
        <dbReference type="ChEBI" id="CHEBI:57287"/>
        <dbReference type="ChEBI" id="CHEBI:57328"/>
        <dbReference type="ChEBI" id="CHEBI:456216"/>
        <dbReference type="EC" id="2.7.1.24"/>
    </reaction>
</comment>
<comment type="pathway">
    <text evidence="1">Cofactor biosynthesis; coenzyme A biosynthesis; CoA from (R)-pantothenate: step 5/5.</text>
</comment>
<comment type="subcellular location">
    <subcellularLocation>
        <location evidence="1">Cytoplasm</location>
    </subcellularLocation>
</comment>
<comment type="similarity">
    <text evidence="1">Belongs to the CoaE family.</text>
</comment>
<name>COAE_SALTY</name>
<proteinExistence type="inferred from homology"/>
<protein>
    <recommendedName>
        <fullName evidence="1">Dephospho-CoA kinase</fullName>
        <ecNumber evidence="1">2.7.1.24</ecNumber>
    </recommendedName>
    <alternativeName>
        <fullName evidence="1">Dephosphocoenzyme A kinase</fullName>
    </alternativeName>
</protein>
<dbReference type="EC" id="2.7.1.24" evidence="1"/>
<dbReference type="EMBL" id="AE006468">
    <property type="protein sequence ID" value="AAL19104.1"/>
    <property type="molecule type" value="Genomic_DNA"/>
</dbReference>
<dbReference type="RefSeq" id="WP_001270913.1">
    <property type="nucleotide sequence ID" value="NC_003197.2"/>
</dbReference>
<dbReference type="SMR" id="P63828"/>
<dbReference type="STRING" id="99287.STM0140"/>
<dbReference type="PaxDb" id="99287-STM0140"/>
<dbReference type="KEGG" id="stm:STM0140"/>
<dbReference type="PATRIC" id="fig|99287.12.peg.148"/>
<dbReference type="HOGENOM" id="CLU_057180_1_2_6"/>
<dbReference type="OMA" id="CQMDIEQ"/>
<dbReference type="PhylomeDB" id="P63828"/>
<dbReference type="BioCyc" id="SENT99287:STM0140-MONOMER"/>
<dbReference type="UniPathway" id="UPA00241">
    <property type="reaction ID" value="UER00356"/>
</dbReference>
<dbReference type="Proteomes" id="UP000001014">
    <property type="component" value="Chromosome"/>
</dbReference>
<dbReference type="GO" id="GO:0005737">
    <property type="term" value="C:cytoplasm"/>
    <property type="evidence" value="ECO:0007669"/>
    <property type="project" value="UniProtKB-SubCell"/>
</dbReference>
<dbReference type="GO" id="GO:0005524">
    <property type="term" value="F:ATP binding"/>
    <property type="evidence" value="ECO:0007669"/>
    <property type="project" value="UniProtKB-UniRule"/>
</dbReference>
<dbReference type="GO" id="GO:0004140">
    <property type="term" value="F:dephospho-CoA kinase activity"/>
    <property type="evidence" value="ECO:0000318"/>
    <property type="project" value="GO_Central"/>
</dbReference>
<dbReference type="GO" id="GO:0015937">
    <property type="term" value="P:coenzyme A biosynthetic process"/>
    <property type="evidence" value="ECO:0000318"/>
    <property type="project" value="GO_Central"/>
</dbReference>
<dbReference type="CDD" id="cd02022">
    <property type="entry name" value="DPCK"/>
    <property type="match status" value="1"/>
</dbReference>
<dbReference type="FunFam" id="3.40.50.300:FF:000518">
    <property type="entry name" value="Dephospho-CoA kinase"/>
    <property type="match status" value="1"/>
</dbReference>
<dbReference type="Gene3D" id="3.40.50.300">
    <property type="entry name" value="P-loop containing nucleotide triphosphate hydrolases"/>
    <property type="match status" value="1"/>
</dbReference>
<dbReference type="HAMAP" id="MF_00376">
    <property type="entry name" value="Dephospho_CoA_kinase"/>
    <property type="match status" value="1"/>
</dbReference>
<dbReference type="InterPro" id="IPR001977">
    <property type="entry name" value="Depp_CoAkinase"/>
</dbReference>
<dbReference type="InterPro" id="IPR027417">
    <property type="entry name" value="P-loop_NTPase"/>
</dbReference>
<dbReference type="NCBIfam" id="TIGR00152">
    <property type="entry name" value="dephospho-CoA kinase"/>
    <property type="match status" value="1"/>
</dbReference>
<dbReference type="PANTHER" id="PTHR10695:SF46">
    <property type="entry name" value="BIFUNCTIONAL COENZYME A SYNTHASE-RELATED"/>
    <property type="match status" value="1"/>
</dbReference>
<dbReference type="PANTHER" id="PTHR10695">
    <property type="entry name" value="DEPHOSPHO-COA KINASE-RELATED"/>
    <property type="match status" value="1"/>
</dbReference>
<dbReference type="Pfam" id="PF01121">
    <property type="entry name" value="CoaE"/>
    <property type="match status" value="1"/>
</dbReference>
<dbReference type="SUPFAM" id="SSF52540">
    <property type="entry name" value="P-loop containing nucleoside triphosphate hydrolases"/>
    <property type="match status" value="1"/>
</dbReference>
<dbReference type="PROSITE" id="PS51219">
    <property type="entry name" value="DPCK"/>
    <property type="match status" value="1"/>
</dbReference>
<feature type="chain" id="PRO_0000172993" description="Dephospho-CoA kinase">
    <location>
        <begin position="1"/>
        <end position="206"/>
    </location>
</feature>
<feature type="domain" description="DPCK" evidence="1">
    <location>
        <begin position="4"/>
        <end position="200"/>
    </location>
</feature>
<feature type="binding site" evidence="1">
    <location>
        <begin position="12"/>
        <end position="17"/>
    </location>
    <ligand>
        <name>ATP</name>
        <dbReference type="ChEBI" id="CHEBI:30616"/>
    </ligand>
</feature>
<keyword id="KW-0067">ATP-binding</keyword>
<keyword id="KW-0173">Coenzyme A biosynthesis</keyword>
<keyword id="KW-0963">Cytoplasm</keyword>
<keyword id="KW-0418">Kinase</keyword>
<keyword id="KW-0547">Nucleotide-binding</keyword>
<keyword id="KW-1185">Reference proteome</keyword>
<keyword id="KW-0808">Transferase</keyword>
<evidence type="ECO:0000255" key="1">
    <source>
        <dbReference type="HAMAP-Rule" id="MF_00376"/>
    </source>
</evidence>
<reference key="1">
    <citation type="journal article" date="2001" name="Nature">
        <title>Complete genome sequence of Salmonella enterica serovar Typhimurium LT2.</title>
        <authorList>
            <person name="McClelland M."/>
            <person name="Sanderson K.E."/>
            <person name="Spieth J."/>
            <person name="Clifton S.W."/>
            <person name="Latreille P."/>
            <person name="Courtney L."/>
            <person name="Porwollik S."/>
            <person name="Ali J."/>
            <person name="Dante M."/>
            <person name="Du F."/>
            <person name="Hou S."/>
            <person name="Layman D."/>
            <person name="Leonard S."/>
            <person name="Nguyen C."/>
            <person name="Scott K."/>
            <person name="Holmes A."/>
            <person name="Grewal N."/>
            <person name="Mulvaney E."/>
            <person name="Ryan E."/>
            <person name="Sun H."/>
            <person name="Florea L."/>
            <person name="Miller W."/>
            <person name="Stoneking T."/>
            <person name="Nhan M."/>
            <person name="Waterston R."/>
            <person name="Wilson R.K."/>
        </authorList>
    </citation>
    <scope>NUCLEOTIDE SEQUENCE [LARGE SCALE GENOMIC DNA]</scope>
    <source>
        <strain>LT2 / SGSC1412 / ATCC 700720</strain>
    </source>
</reference>
<accession>P63828</accession>
<accession>Q8XGF5</accession>
<sequence>MRYTVALTGGIGSGKSTVADAFADLGITVIDADIIARQMVEPGQPALNAIAEHFGSELIAADGTLRRRALRERIFSHPEEKAWLNALLHPLIQQETQRQFQQATSPYVLWVVPLLVENRLYQKANRVLVVDVTPETQLIRTMQRDDVTREHVEHILAAQATREARLAVADDVIDNNGAPDAIASDVARLHASYLKLASQFVSQEKP</sequence>